<evidence type="ECO:0000269" key="1">
    <source>
    </source>
</evidence>
<evidence type="ECO:0000305" key="2"/>
<name>Y0571_MYCTO</name>
<reference key="1">
    <citation type="journal article" date="2002" name="J. Bacteriol.">
        <title>Whole-genome comparison of Mycobacterium tuberculosis clinical and laboratory strains.</title>
        <authorList>
            <person name="Fleischmann R.D."/>
            <person name="Alland D."/>
            <person name="Eisen J.A."/>
            <person name="Carpenter L."/>
            <person name="White O."/>
            <person name="Peterson J.D."/>
            <person name="DeBoy R.T."/>
            <person name="Dodson R.J."/>
            <person name="Gwinn M.L."/>
            <person name="Haft D.H."/>
            <person name="Hickey E.K."/>
            <person name="Kolonay J.F."/>
            <person name="Nelson W.C."/>
            <person name="Umayam L.A."/>
            <person name="Ermolaeva M.D."/>
            <person name="Salzberg S.L."/>
            <person name="Delcher A."/>
            <person name="Utterback T.R."/>
            <person name="Weidman J.F."/>
            <person name="Khouri H.M."/>
            <person name="Gill J."/>
            <person name="Mikula A."/>
            <person name="Bishai W."/>
            <person name="Jacobs W.R. Jr."/>
            <person name="Venter J.C."/>
            <person name="Fraser C.M."/>
        </authorList>
    </citation>
    <scope>NUCLEOTIDE SEQUENCE [LARGE SCALE GENOMIC DNA]</scope>
    <source>
        <strain>CDC 1551 / Oshkosh</strain>
    </source>
</reference>
<reference key="2">
    <citation type="journal article" date="2003" name="J. Exp. Med.">
        <title>Inhibition of respiration by nitric oxide induces a Mycobacterium tuberculosis dormancy program.</title>
        <authorList>
            <person name="Voskuil M.I."/>
            <person name="Schnappinger D."/>
            <person name="Visconti K.C."/>
            <person name="Harrell M.I."/>
            <person name="Dolganov G.M."/>
            <person name="Sherman D.R."/>
            <person name="Schoolnik G.K."/>
        </authorList>
    </citation>
    <scope>INDUCTION BY NITRIC OXIDE (NO) AND BY HYPOXIA</scope>
    <scope>DORMANCY REGULON</scope>
    <source>
        <strain>CDC 1551 / Oshkosh</strain>
    </source>
</reference>
<dbReference type="EMBL" id="AE000516">
    <property type="protein sequence ID" value="AAK44820.1"/>
    <property type="status" value="ALT_INIT"/>
    <property type="molecule type" value="Genomic_DNA"/>
</dbReference>
<dbReference type="PIR" id="B70933">
    <property type="entry name" value="B70933"/>
</dbReference>
<dbReference type="RefSeq" id="WP_003403001.1">
    <property type="nucleotide sequence ID" value="NZ_KK341227.1"/>
</dbReference>
<dbReference type="SMR" id="P9WHK0"/>
<dbReference type="ESTHER" id="myctu-y0571">
    <property type="family name" value="DLH-S"/>
</dbReference>
<dbReference type="KEGG" id="mtc:MT0597"/>
<dbReference type="PATRIC" id="fig|83331.31.peg.629"/>
<dbReference type="HOGENOM" id="CLU_050038_0_0_11"/>
<dbReference type="Proteomes" id="UP000001020">
    <property type="component" value="Chromosome"/>
</dbReference>
<dbReference type="GO" id="GO:0016787">
    <property type="term" value="F:hydrolase activity"/>
    <property type="evidence" value="ECO:0007669"/>
    <property type="project" value="InterPro"/>
</dbReference>
<dbReference type="GO" id="GO:0016740">
    <property type="term" value="F:transferase activity"/>
    <property type="evidence" value="ECO:0007669"/>
    <property type="project" value="UniProtKB-KW"/>
</dbReference>
<dbReference type="CDD" id="cd06223">
    <property type="entry name" value="PRTases_typeI"/>
    <property type="match status" value="1"/>
</dbReference>
<dbReference type="Gene3D" id="3.40.50.2020">
    <property type="match status" value="1"/>
</dbReference>
<dbReference type="Gene3D" id="3.40.50.1820">
    <property type="entry name" value="alpha/beta hydrolase"/>
    <property type="match status" value="1"/>
</dbReference>
<dbReference type="Gene3D" id="3.30.1310.20">
    <property type="entry name" value="PRTase-like"/>
    <property type="match status" value="1"/>
</dbReference>
<dbReference type="InterPro" id="IPR029058">
    <property type="entry name" value="AB_hydrolase_fold"/>
</dbReference>
<dbReference type="InterPro" id="IPR002925">
    <property type="entry name" value="Dienelactn_hydro"/>
</dbReference>
<dbReference type="InterPro" id="IPR052036">
    <property type="entry name" value="Hydrolase/PRTase-associated"/>
</dbReference>
<dbReference type="InterPro" id="IPR000836">
    <property type="entry name" value="PRibTrfase_dom"/>
</dbReference>
<dbReference type="InterPro" id="IPR029057">
    <property type="entry name" value="PRTase-like"/>
</dbReference>
<dbReference type="PANTHER" id="PTHR31299">
    <property type="entry name" value="ESTERASE, PUTATIVE (AFU_ORTHOLOGUE AFUA_1G05850)-RELATED"/>
    <property type="match status" value="1"/>
</dbReference>
<dbReference type="PANTHER" id="PTHR31299:SF0">
    <property type="entry name" value="ESTERASE, PUTATIVE (AFU_ORTHOLOGUE AFUA_1G05850)-RELATED"/>
    <property type="match status" value="1"/>
</dbReference>
<dbReference type="Pfam" id="PF01738">
    <property type="entry name" value="DLH"/>
    <property type="match status" value="1"/>
</dbReference>
<dbReference type="Pfam" id="PF00156">
    <property type="entry name" value="Pribosyltran"/>
    <property type="match status" value="1"/>
</dbReference>
<dbReference type="SUPFAM" id="SSF53474">
    <property type="entry name" value="alpha/beta-Hydrolases"/>
    <property type="match status" value="1"/>
</dbReference>
<dbReference type="SUPFAM" id="SSF53271">
    <property type="entry name" value="PRTase-like"/>
    <property type="match status" value="1"/>
</dbReference>
<sequence>MKLFDDRGDAGRQLAQRLAQLSGKAVVVLGLPRGGVPVAFEVAKSLQAPLDVLVVRKLGVPFQPELAFGAIGEDGVRVLNDDVVRGTHLDAAAMDAVERKQLIELQRRAERFRRGRDRIPLTGRIAVIVDDGIATGATAKAACQVARAHGADKVVLAVPIGPDDIVARFAGYADEVVCLATPALFFAVGQGYRNFTQTSDDEVVAFLDRAHRDFAEAGAIDAAADPPLRDEEVQVVAGPVPVAGHLTVPEKPRGIVVFAHGSGSSRHSIRNRYVAEVLTGAGFATLLFDLLTPEEERNRANVFDIELLASRLIDVTGWLATQPDTASLPVGYFGASTGAGAALVAAADPRVNVRAVVSRGGRPDLAGDSLGSVVAPTLLIVGGRDQVVLELNQRAQAVIPGKCQLTVVPGATHLFEEPGTLEQVAKLACDWFIDHLCGPGPSG</sequence>
<keyword id="KW-1185">Reference proteome</keyword>
<keyword id="KW-0808">Transferase</keyword>
<gene>
    <name type="ordered locus">MT0597</name>
</gene>
<comment type="induction">
    <text evidence="1">A member of the dormancy regulon. Induced in response to reduced oxygen tension (hypoxia) and low levels of nitric oxide (NO).</text>
</comment>
<comment type="similarity">
    <text evidence="2">In the N-terminal section; belongs to the purine/pyrimidine phosphoribosyltransferase family.</text>
</comment>
<comment type="similarity">
    <text evidence="2">In the C-terminal section; belongs to the dienelactone hydrolase family.</text>
</comment>
<comment type="sequence caution" evidence="2">
    <conflict type="erroneous initiation">
        <sequence resource="EMBL-CDS" id="AAK44820"/>
    </conflict>
</comment>
<protein>
    <recommendedName>
        <fullName>Putative phosphoribosyl transferase MT0597</fullName>
    </recommendedName>
</protein>
<proteinExistence type="evidence at transcript level"/>
<organism>
    <name type="scientific">Mycobacterium tuberculosis (strain CDC 1551 / Oshkosh)</name>
    <dbReference type="NCBI Taxonomy" id="83331"/>
    <lineage>
        <taxon>Bacteria</taxon>
        <taxon>Bacillati</taxon>
        <taxon>Actinomycetota</taxon>
        <taxon>Actinomycetes</taxon>
        <taxon>Mycobacteriales</taxon>
        <taxon>Mycobacteriaceae</taxon>
        <taxon>Mycobacterium</taxon>
        <taxon>Mycobacterium tuberculosis complex</taxon>
    </lineage>
</organism>
<accession>P9WHK0</accession>
<accession>L0T5R8</accession>
<accession>O53768</accession>
<accession>Q7D9M2</accession>
<feature type="chain" id="PRO_0000428171" description="Putative phosphoribosyl transferase MT0597">
    <location>
        <begin position="1"/>
        <end position="443"/>
    </location>
</feature>